<feature type="chain" id="PRO_0000385501" description="EKC/KEOPS complex subunit BUD32">
    <location>
        <begin position="1"/>
        <end position="197"/>
    </location>
</feature>
<feature type="domain" description="Protein kinase">
    <location>
        <begin position="1"/>
        <end position="197"/>
    </location>
</feature>
<feature type="active site" description="Proton acceptor" evidence="1">
    <location>
        <position position="113"/>
    </location>
</feature>
<feature type="binding site" evidence="1">
    <location>
        <begin position="4"/>
        <end position="12"/>
    </location>
    <ligand>
        <name>ATP</name>
        <dbReference type="ChEBI" id="CHEBI:30616"/>
    </ligand>
</feature>
<feature type="binding site" evidence="1">
    <location>
        <position position="22"/>
    </location>
    <ligand>
        <name>ATP</name>
        <dbReference type="ChEBI" id="CHEBI:30616"/>
    </ligand>
</feature>
<sequence>MGFHFQGAESIISADGETVVKKRARKAYRIEALDLKIINGRTKREAKILRKLEALGIPAPRLISTYGDTIVMEKVEGTVLKEMIDSSDNPGALFRDLGALVSRLHIADIIHGDLTTSNFIHGSKIYAIDFGLSYISRKDEDKAVDLYVFEKAVGCAHDAKFLEDFYCGYMGEGSESVLKKLGTVRLRGRKREAMAFG</sequence>
<dbReference type="EC" id="3.6.-.-" evidence="3"/>
<dbReference type="EC" id="2.7.11.1" evidence="2"/>
<dbReference type="EMBL" id="AL590446">
    <property type="protein sequence ID" value="CAD25400.1"/>
    <property type="molecule type" value="Genomic_DNA"/>
</dbReference>
<dbReference type="RefSeq" id="NP_585796.1">
    <property type="nucleotide sequence ID" value="NM_001041418.1"/>
</dbReference>
<dbReference type="SMR" id="Q8SVD9"/>
<dbReference type="FunCoup" id="Q8SVD9">
    <property type="interactions" value="109"/>
</dbReference>
<dbReference type="STRING" id="284813.Q8SVD9"/>
<dbReference type="GeneID" id="859219"/>
<dbReference type="KEGG" id="ecu:ECU06_0400"/>
<dbReference type="VEuPathDB" id="MicrosporidiaDB:ECU06_0400"/>
<dbReference type="HOGENOM" id="CLU_063953_2_0_1"/>
<dbReference type="InParanoid" id="Q8SVD9"/>
<dbReference type="OMA" id="AYCEVHP"/>
<dbReference type="OrthoDB" id="3399at2759"/>
<dbReference type="Proteomes" id="UP000000819">
    <property type="component" value="Chromosome VI"/>
</dbReference>
<dbReference type="GO" id="GO:0000781">
    <property type="term" value="C:chromosome, telomeric region"/>
    <property type="evidence" value="ECO:0007669"/>
    <property type="project" value="UniProtKB-SubCell"/>
</dbReference>
<dbReference type="GO" id="GO:0005829">
    <property type="term" value="C:cytosol"/>
    <property type="evidence" value="ECO:0007669"/>
    <property type="project" value="TreeGrafter"/>
</dbReference>
<dbReference type="GO" id="GO:0005634">
    <property type="term" value="C:nucleus"/>
    <property type="evidence" value="ECO:0007669"/>
    <property type="project" value="UniProtKB-SubCell"/>
</dbReference>
<dbReference type="GO" id="GO:0005524">
    <property type="term" value="F:ATP binding"/>
    <property type="evidence" value="ECO:0007669"/>
    <property type="project" value="UniProtKB-KW"/>
</dbReference>
<dbReference type="GO" id="GO:0016787">
    <property type="term" value="F:hydrolase activity"/>
    <property type="evidence" value="ECO:0007669"/>
    <property type="project" value="UniProtKB-KW"/>
</dbReference>
<dbReference type="GO" id="GO:0106310">
    <property type="term" value="F:protein serine kinase activity"/>
    <property type="evidence" value="ECO:0007669"/>
    <property type="project" value="RHEA"/>
</dbReference>
<dbReference type="GO" id="GO:0004674">
    <property type="term" value="F:protein serine/threonine kinase activity"/>
    <property type="evidence" value="ECO:0007669"/>
    <property type="project" value="UniProtKB-KW"/>
</dbReference>
<dbReference type="GO" id="GO:0008033">
    <property type="term" value="P:tRNA processing"/>
    <property type="evidence" value="ECO:0007669"/>
    <property type="project" value="UniProtKB-KW"/>
</dbReference>
<dbReference type="Gene3D" id="3.30.200.20">
    <property type="entry name" value="Phosphorylase Kinase, domain 1"/>
    <property type="match status" value="1"/>
</dbReference>
<dbReference type="Gene3D" id="1.10.510.10">
    <property type="entry name" value="Transferase(Phosphotransferase) domain 1"/>
    <property type="match status" value="1"/>
</dbReference>
<dbReference type="InterPro" id="IPR022495">
    <property type="entry name" value="Bud32"/>
</dbReference>
<dbReference type="InterPro" id="IPR011009">
    <property type="entry name" value="Kinase-like_dom_sf"/>
</dbReference>
<dbReference type="InterPro" id="IPR018934">
    <property type="entry name" value="RIO_dom"/>
</dbReference>
<dbReference type="NCBIfam" id="TIGR03724">
    <property type="entry name" value="arch_bud32"/>
    <property type="match status" value="1"/>
</dbReference>
<dbReference type="PANTHER" id="PTHR12209:SF0">
    <property type="entry name" value="EKC_KEOPS COMPLEX SUBUNIT TP53RK"/>
    <property type="match status" value="1"/>
</dbReference>
<dbReference type="PANTHER" id="PTHR12209">
    <property type="entry name" value="NON-SPECIFIC SERINE/THREONINE PROTEIN KINASE"/>
    <property type="match status" value="1"/>
</dbReference>
<dbReference type="Pfam" id="PF01163">
    <property type="entry name" value="RIO1"/>
    <property type="match status" value="1"/>
</dbReference>
<dbReference type="SUPFAM" id="SSF56112">
    <property type="entry name" value="Protein kinase-like (PK-like)"/>
    <property type="match status" value="1"/>
</dbReference>
<protein>
    <recommendedName>
        <fullName>EKC/KEOPS complex subunit BUD32</fullName>
        <ecNumber evidence="3">3.6.-.-</ecNumber>
    </recommendedName>
    <alternativeName>
        <fullName>Atypical serine/threonine protein kinase BUD32</fullName>
        <ecNumber evidence="2">2.7.11.1</ecNumber>
    </alternativeName>
</protein>
<evidence type="ECO:0000250" key="1"/>
<evidence type="ECO:0000250" key="2">
    <source>
        <dbReference type="UniProtKB" id="P53323"/>
    </source>
</evidence>
<evidence type="ECO:0000250" key="3">
    <source>
        <dbReference type="UniProtKB" id="Q9UYB9"/>
    </source>
</evidence>
<evidence type="ECO:0000305" key="4"/>
<keyword id="KW-0010">Activator</keyword>
<keyword id="KW-0067">ATP-binding</keyword>
<keyword id="KW-0158">Chromosome</keyword>
<keyword id="KW-0963">Cytoplasm</keyword>
<keyword id="KW-0378">Hydrolase</keyword>
<keyword id="KW-0418">Kinase</keyword>
<keyword id="KW-0547">Nucleotide-binding</keyword>
<keyword id="KW-0539">Nucleus</keyword>
<keyword id="KW-0597">Phosphoprotein</keyword>
<keyword id="KW-1185">Reference proteome</keyword>
<keyword id="KW-0723">Serine/threonine-protein kinase</keyword>
<keyword id="KW-0779">Telomere</keyword>
<keyword id="KW-0804">Transcription</keyword>
<keyword id="KW-0805">Transcription regulation</keyword>
<keyword id="KW-0808">Transferase</keyword>
<keyword id="KW-0819">tRNA processing</keyword>
<gene>
    <name type="primary">BUD32</name>
    <name type="ordered locus">ECU06_0400</name>
</gene>
<accession>Q8SVD9</accession>
<name>BUD32_ENCCU</name>
<proteinExistence type="inferred from homology"/>
<organism>
    <name type="scientific">Encephalitozoon cuniculi (strain GB-M1)</name>
    <name type="common">Microsporidian parasite</name>
    <dbReference type="NCBI Taxonomy" id="284813"/>
    <lineage>
        <taxon>Eukaryota</taxon>
        <taxon>Fungi</taxon>
        <taxon>Fungi incertae sedis</taxon>
        <taxon>Microsporidia</taxon>
        <taxon>Unikaryonidae</taxon>
        <taxon>Encephalitozoon</taxon>
    </lineage>
</organism>
<comment type="function">
    <text evidence="2">Component of the EKC/KEOPS complex that is required for the formation of a threonylcarbamoyl group on adenosine at position 37 (t(6)A37) in tRNAs that read codons beginning with adenine. The complex is probably involved in the transfer of the threonylcarbamoyl moiety of threonylcarbamoyl-AMP (TC-AMP) to the N6 group of A37. BUD32 has ATPase activity in the context of the EKC/KEOPS complex and likely plays a supporting role to the catalytic subunit KAE1. The EKC/KEOPS complex also promotes both telomere uncapping and telomere elongation. The complex is required for efficient recruitment of transcriptional coactivators.</text>
</comment>
<comment type="catalytic activity">
    <reaction evidence="2">
        <text>L-seryl-[protein] + ATP = O-phospho-L-seryl-[protein] + ADP + H(+)</text>
        <dbReference type="Rhea" id="RHEA:17989"/>
        <dbReference type="Rhea" id="RHEA-COMP:9863"/>
        <dbReference type="Rhea" id="RHEA-COMP:11604"/>
        <dbReference type="ChEBI" id="CHEBI:15378"/>
        <dbReference type="ChEBI" id="CHEBI:29999"/>
        <dbReference type="ChEBI" id="CHEBI:30616"/>
        <dbReference type="ChEBI" id="CHEBI:83421"/>
        <dbReference type="ChEBI" id="CHEBI:456216"/>
        <dbReference type="EC" id="2.7.11.1"/>
    </reaction>
</comment>
<comment type="catalytic activity">
    <reaction evidence="2">
        <text>L-threonyl-[protein] + ATP = O-phospho-L-threonyl-[protein] + ADP + H(+)</text>
        <dbReference type="Rhea" id="RHEA:46608"/>
        <dbReference type="Rhea" id="RHEA-COMP:11060"/>
        <dbReference type="Rhea" id="RHEA-COMP:11605"/>
        <dbReference type="ChEBI" id="CHEBI:15378"/>
        <dbReference type="ChEBI" id="CHEBI:30013"/>
        <dbReference type="ChEBI" id="CHEBI:30616"/>
        <dbReference type="ChEBI" id="CHEBI:61977"/>
        <dbReference type="ChEBI" id="CHEBI:456216"/>
        <dbReference type="EC" id="2.7.11.1"/>
    </reaction>
</comment>
<comment type="subunit">
    <text evidence="2">Component of the EKC/KEOPS complex composed of at least BUD32, CGI121, GON7, KAE1 and PCC1; the whole complex dimerizes.</text>
</comment>
<comment type="subcellular location">
    <subcellularLocation>
        <location evidence="2">Cytoplasm</location>
    </subcellularLocation>
    <subcellularLocation>
        <location evidence="2">Nucleus</location>
    </subcellularLocation>
    <subcellularLocation>
        <location evidence="2">Chromosome</location>
        <location evidence="2">Telomere</location>
    </subcellularLocation>
</comment>
<comment type="domain">
    <text evidence="2 3">This protein is considered an atypical serine/threonine kinase, because it lacks the conventional structural elements necessary for the substrate recognition as well as a lysine residue that in all other serine/threonine kinases participates in the catalytic event (By similarity). BUD32 has protein kinase activity in vitro, but in the context of the EKC/KEOPS complex, the catalytic subunit KAE1 switches the activity of BUD32 from kinase into ATPase (By similarity).</text>
</comment>
<comment type="similarity">
    <text evidence="4">Belongs to the protein kinase superfamily. BUD32 family.</text>
</comment>
<reference key="1">
    <citation type="journal article" date="2001" name="Nature">
        <title>Genome sequence and gene compaction of the eukaryote parasite Encephalitozoon cuniculi.</title>
        <authorList>
            <person name="Katinka M.D."/>
            <person name="Duprat S."/>
            <person name="Cornillot E."/>
            <person name="Metenier G."/>
            <person name="Thomarat F."/>
            <person name="Prensier G."/>
            <person name="Barbe V."/>
            <person name="Peyretaillade E."/>
            <person name="Brottier P."/>
            <person name="Wincker P."/>
            <person name="Delbac F."/>
            <person name="El Alaoui H."/>
            <person name="Peyret P."/>
            <person name="Saurin W."/>
            <person name="Gouy M."/>
            <person name="Weissenbach J."/>
            <person name="Vivares C.P."/>
        </authorList>
    </citation>
    <scope>NUCLEOTIDE SEQUENCE [LARGE SCALE GENOMIC DNA]</scope>
    <source>
        <strain>GB-M1</strain>
    </source>
</reference>
<reference key="2">
    <citation type="journal article" date="2007" name="BMC Genomics">
        <title>The complement of protein kinases of the microsporidium Encephalitozoon cuniculi in relation to those of Saccharomyces cerevisiae and Schizosaccharomyces pombe.</title>
        <authorList>
            <person name="Miranda-Saavedra D."/>
            <person name="Stark M.J.R."/>
            <person name="Packer J.C."/>
            <person name="Vivares C.P."/>
            <person name="Doerig C."/>
            <person name="Barton G.J."/>
        </authorList>
    </citation>
    <scope>PREDICTION OF FUNCTION</scope>
</reference>